<name>CHDH_HUMAN</name>
<organism>
    <name type="scientific">Homo sapiens</name>
    <name type="common">Human</name>
    <dbReference type="NCBI Taxonomy" id="9606"/>
    <lineage>
        <taxon>Eukaryota</taxon>
        <taxon>Metazoa</taxon>
        <taxon>Chordata</taxon>
        <taxon>Craniata</taxon>
        <taxon>Vertebrata</taxon>
        <taxon>Euteleostomi</taxon>
        <taxon>Mammalia</taxon>
        <taxon>Eutheria</taxon>
        <taxon>Euarchontoglires</taxon>
        <taxon>Primates</taxon>
        <taxon>Haplorrhini</taxon>
        <taxon>Catarrhini</taxon>
        <taxon>Hominidae</taxon>
        <taxon>Homo</taxon>
    </lineage>
</organism>
<evidence type="ECO:0000250" key="1"/>
<evidence type="ECO:0000250" key="2">
    <source>
        <dbReference type="UniProtKB" id="E4QP00"/>
    </source>
</evidence>
<evidence type="ECO:0000250" key="3">
    <source>
        <dbReference type="UniProtKB" id="Q8BJ64"/>
    </source>
</evidence>
<evidence type="ECO:0000269" key="4">
    <source>
    </source>
</evidence>
<evidence type="ECO:0000305" key="5"/>
<feature type="transit peptide" description="Mitochondrion" evidence="1">
    <location>
        <begin position="1"/>
        <end position="29"/>
    </location>
</feature>
<feature type="chain" id="PRO_0000012329" description="Choline dehydrogenase, mitochondrial">
    <location>
        <begin position="30"/>
        <end position="594"/>
    </location>
</feature>
<feature type="active site" description="Proton acceptor" evidence="2">
    <location>
        <position position="511"/>
    </location>
</feature>
<feature type="binding site" evidence="1">
    <location>
        <begin position="42"/>
        <end position="71"/>
    </location>
    <ligand>
        <name>FAD</name>
        <dbReference type="ChEBI" id="CHEBI:57692"/>
    </ligand>
</feature>
<feature type="modified residue" description="N6-succinyllysine" evidence="3">
    <location>
        <position position="436"/>
    </location>
</feature>
<feature type="modified residue" description="N6-acetyllysine; alternate" evidence="3">
    <location>
        <position position="484"/>
    </location>
</feature>
<feature type="modified residue" description="N6-succinyllysine; alternate" evidence="3">
    <location>
        <position position="484"/>
    </location>
</feature>
<feature type="modified residue" description="N6-acetyllysine; alternate" evidence="3">
    <location>
        <position position="496"/>
    </location>
</feature>
<feature type="modified residue" description="N6-succinyllysine; alternate" evidence="3">
    <location>
        <position position="496"/>
    </location>
</feature>
<feature type="modified residue" description="N6-acetyllysine" evidence="3">
    <location>
        <position position="580"/>
    </location>
</feature>
<feature type="sequence variant" id="VAR_020421" description="In dbSNP:rs9001.">
    <original>E</original>
    <variation>A</variation>
    <location>
        <position position="40"/>
    </location>
</feature>
<feature type="sequence variant" id="VAR_055097" description="In dbSNP:rs12676." evidence="4">
    <original>L</original>
    <variation>R</variation>
    <location>
        <position position="78"/>
    </location>
</feature>
<feature type="sequence variant" id="VAR_049357" description="In dbSNP:rs34974961.">
    <original>N</original>
    <variation>S</variation>
    <location>
        <position position="441"/>
    </location>
</feature>
<feature type="sequence conflict" description="In Ref. 3; CAB75961." evidence="5" ref="3">
    <original>R</original>
    <variation>A</variation>
    <location>
        <position position="113"/>
    </location>
</feature>
<sequence length="594" mass="65358">MWCLLRGLGRPGALARGALGQQQSLGARALASAGSESRDEYSYVVVGAGSAGCVLAGRLTEDPAERVLLLEAGPKDVLAGSKRLSWKIHMPAALVANLCDDRYNWCYHTEVQRGLDGRVLYWPRGRVWGGSSSLNAMVYVRGHAEDYERWQRQGARGWDYAHCLPYFRKAQGHELGASRYRGADGPLRVSRGKTNHPLHCAFLEATQQAGYPLTEDMNGFQQEGFGWMDMTIHEGKRWSAACAYLHPALSRTNLKAEAETLVSRVLFEGTRAVGVEYVKNGQSHRAYASKEVILSGGAINSPQLLMLSGIGNADDLKKLGIPVVCHLPGVGQNLQDHLEIYIQQACTRPITLHSAQKPLRKVCIGLEWLWKFTGEGATAHLETGGFIRSQPGVPHPDIQFHFLPSQVIDHGRVPTQQEAYQVHVGPMRGTSVGWLKLRSANPQDHPVIQPNYLSTETDIEDFRLCVKLTREIFAQEALAPFRGKELQPGSHIQSDKEIDAFVRAKADSAYHPSCTCKMGQPSDPTAVVDPQTRVLGVENLRVVDASIMPSMVSGNLNAPTIMIAEKAADIIKGQPALWDKDVPVYKPRTLATQR</sequence>
<protein>
    <recommendedName>
        <fullName>Choline dehydrogenase, mitochondrial</fullName>
        <shortName>CDH</shortName>
        <shortName>CHD</shortName>
        <ecNumber>1.1.99.1</ecNumber>
    </recommendedName>
</protein>
<keyword id="KW-0007">Acetylation</keyword>
<keyword id="KW-0274">FAD</keyword>
<keyword id="KW-0285">Flavoprotein</keyword>
<keyword id="KW-0472">Membrane</keyword>
<keyword id="KW-0496">Mitochondrion</keyword>
<keyword id="KW-0999">Mitochondrion inner membrane</keyword>
<keyword id="KW-0560">Oxidoreductase</keyword>
<keyword id="KW-1267">Proteomics identification</keyword>
<keyword id="KW-1185">Reference proteome</keyword>
<keyword id="KW-0809">Transit peptide</keyword>
<dbReference type="EC" id="1.1.99.1"/>
<dbReference type="EMBL" id="AC012467">
    <property type="status" value="NOT_ANNOTATED_CDS"/>
    <property type="molecule type" value="Genomic_DNA"/>
</dbReference>
<dbReference type="EMBL" id="BC034502">
    <property type="protein sequence ID" value="AAH34502.1"/>
    <property type="molecule type" value="mRNA"/>
</dbReference>
<dbReference type="EMBL" id="AJ272267">
    <property type="protein sequence ID" value="CAB75961.1"/>
    <property type="molecule type" value="mRNA"/>
</dbReference>
<dbReference type="CCDS" id="CCDS2873.1"/>
<dbReference type="RefSeq" id="NP_060867.2">
    <property type="nucleotide sequence ID" value="NM_018397.5"/>
</dbReference>
<dbReference type="RefSeq" id="XP_016862286.1">
    <property type="nucleotide sequence ID" value="XM_017006797.1"/>
</dbReference>
<dbReference type="RefSeq" id="XP_016862287.1">
    <property type="nucleotide sequence ID" value="XM_017006798.1"/>
</dbReference>
<dbReference type="SMR" id="Q8NE62"/>
<dbReference type="BioGRID" id="120629">
    <property type="interactions" value="27"/>
</dbReference>
<dbReference type="CORUM" id="Q8NE62"/>
<dbReference type="FunCoup" id="Q8NE62">
    <property type="interactions" value="414"/>
</dbReference>
<dbReference type="IntAct" id="Q8NE62">
    <property type="interactions" value="23"/>
</dbReference>
<dbReference type="MINT" id="Q8NE62"/>
<dbReference type="STRING" id="9606.ENSP00000319851"/>
<dbReference type="DrugBank" id="DB00122">
    <property type="generic name" value="Choline"/>
</dbReference>
<dbReference type="DrugBank" id="DB14006">
    <property type="generic name" value="Choline salicylate"/>
</dbReference>
<dbReference type="iPTMnet" id="Q8NE62"/>
<dbReference type="PhosphoSitePlus" id="Q8NE62"/>
<dbReference type="SwissPalm" id="Q8NE62"/>
<dbReference type="BioMuta" id="CHDH"/>
<dbReference type="DMDM" id="229462828"/>
<dbReference type="jPOST" id="Q8NE62"/>
<dbReference type="MassIVE" id="Q8NE62"/>
<dbReference type="PaxDb" id="9606-ENSP00000319851"/>
<dbReference type="PeptideAtlas" id="Q8NE62"/>
<dbReference type="ProteomicsDB" id="73126"/>
<dbReference type="Pumba" id="Q8NE62"/>
<dbReference type="Antibodypedia" id="31431">
    <property type="antibodies" value="139 antibodies from 23 providers"/>
</dbReference>
<dbReference type="DNASU" id="55349"/>
<dbReference type="Ensembl" id="ENST00000315251.11">
    <property type="protein sequence ID" value="ENSP00000319851.5"/>
    <property type="gene ID" value="ENSG00000016391.11"/>
</dbReference>
<dbReference type="GeneID" id="55349"/>
<dbReference type="KEGG" id="hsa:55349"/>
<dbReference type="MANE-Select" id="ENST00000315251.11">
    <property type="protein sequence ID" value="ENSP00000319851.5"/>
    <property type="RefSeq nucleotide sequence ID" value="NM_018397.5"/>
    <property type="RefSeq protein sequence ID" value="NP_060867.2"/>
</dbReference>
<dbReference type="UCSC" id="uc003dgz.4">
    <property type="organism name" value="human"/>
</dbReference>
<dbReference type="AGR" id="HGNC:24288"/>
<dbReference type="CTD" id="55349"/>
<dbReference type="DisGeNET" id="55349"/>
<dbReference type="GeneCards" id="CHDH"/>
<dbReference type="HGNC" id="HGNC:24288">
    <property type="gene designation" value="CHDH"/>
</dbReference>
<dbReference type="HPA" id="ENSG00000016391">
    <property type="expression patterns" value="Tissue enhanced (kidney, liver)"/>
</dbReference>
<dbReference type="neXtProt" id="NX_Q8NE62"/>
<dbReference type="OpenTargets" id="ENSG00000016391"/>
<dbReference type="PharmGKB" id="PA134873121"/>
<dbReference type="VEuPathDB" id="HostDB:ENSG00000016391"/>
<dbReference type="eggNOG" id="KOG1238">
    <property type="taxonomic scope" value="Eukaryota"/>
</dbReference>
<dbReference type="GeneTree" id="ENSGT00530000063260"/>
<dbReference type="HOGENOM" id="CLU_002865_7_1_1"/>
<dbReference type="InParanoid" id="Q8NE62"/>
<dbReference type="OMA" id="NHFESCA"/>
<dbReference type="OrthoDB" id="269227at2759"/>
<dbReference type="PAN-GO" id="Q8NE62">
    <property type="GO annotations" value="2 GO annotations based on evolutionary models"/>
</dbReference>
<dbReference type="PhylomeDB" id="Q8NE62"/>
<dbReference type="TreeFam" id="TF313911"/>
<dbReference type="BioCyc" id="MetaCyc:HS00375-MONOMER"/>
<dbReference type="BRENDA" id="1.1.99.1">
    <property type="organism ID" value="2681"/>
</dbReference>
<dbReference type="PathwayCommons" id="Q8NE62"/>
<dbReference type="Reactome" id="R-HSA-6798163">
    <property type="pathway name" value="Choline catabolism"/>
</dbReference>
<dbReference type="SignaLink" id="Q8NE62"/>
<dbReference type="UniPathway" id="UPA00529">
    <property type="reaction ID" value="UER00385"/>
</dbReference>
<dbReference type="BioGRID-ORCS" id="55349">
    <property type="hits" value="13 hits in 1145 CRISPR screens"/>
</dbReference>
<dbReference type="ChiTaRS" id="CHDH">
    <property type="organism name" value="human"/>
</dbReference>
<dbReference type="GenomeRNAi" id="55349"/>
<dbReference type="Pharos" id="Q8NE62">
    <property type="development level" value="Tbio"/>
</dbReference>
<dbReference type="PRO" id="PR:Q8NE62"/>
<dbReference type="Proteomes" id="UP000005640">
    <property type="component" value="Chromosome 3"/>
</dbReference>
<dbReference type="RNAct" id="Q8NE62">
    <property type="molecule type" value="protein"/>
</dbReference>
<dbReference type="Bgee" id="ENSG00000016391">
    <property type="expression patterns" value="Expressed in kidney epithelium and 186 other cell types or tissues"/>
</dbReference>
<dbReference type="ExpressionAtlas" id="Q8NE62">
    <property type="expression patterns" value="baseline and differential"/>
</dbReference>
<dbReference type="GO" id="GO:0005743">
    <property type="term" value="C:mitochondrial inner membrane"/>
    <property type="evidence" value="ECO:0000318"/>
    <property type="project" value="GO_Central"/>
</dbReference>
<dbReference type="GO" id="GO:0005739">
    <property type="term" value="C:mitochondrion"/>
    <property type="evidence" value="ECO:0006056"/>
    <property type="project" value="FlyBase"/>
</dbReference>
<dbReference type="GO" id="GO:0008812">
    <property type="term" value="F:choline dehydrogenase activity"/>
    <property type="evidence" value="ECO:0000318"/>
    <property type="project" value="GO_Central"/>
</dbReference>
<dbReference type="GO" id="GO:0050660">
    <property type="term" value="F:flavin adenine dinucleotide binding"/>
    <property type="evidence" value="ECO:0007669"/>
    <property type="project" value="InterPro"/>
</dbReference>
<dbReference type="GO" id="GO:0042426">
    <property type="term" value="P:choline catabolic process"/>
    <property type="evidence" value="ECO:0000304"/>
    <property type="project" value="Reactome"/>
</dbReference>
<dbReference type="GO" id="GO:0019285">
    <property type="term" value="P:glycine betaine biosynthetic process from choline"/>
    <property type="evidence" value="ECO:0007669"/>
    <property type="project" value="UniProtKB-UniPathway"/>
</dbReference>
<dbReference type="Gene3D" id="3.50.50.60">
    <property type="entry name" value="FAD/NAD(P)-binding domain"/>
    <property type="match status" value="1"/>
</dbReference>
<dbReference type="Gene3D" id="3.30.560.10">
    <property type="entry name" value="Glucose Oxidase, domain 3"/>
    <property type="match status" value="1"/>
</dbReference>
<dbReference type="InterPro" id="IPR036188">
    <property type="entry name" value="FAD/NAD-bd_sf"/>
</dbReference>
<dbReference type="InterPro" id="IPR012132">
    <property type="entry name" value="GMC_OxRdtase"/>
</dbReference>
<dbReference type="InterPro" id="IPR000172">
    <property type="entry name" value="GMC_OxRdtase_N"/>
</dbReference>
<dbReference type="InterPro" id="IPR007867">
    <property type="entry name" value="GMC_OxRtase_C"/>
</dbReference>
<dbReference type="NCBIfam" id="NF002550">
    <property type="entry name" value="PRK02106.1"/>
    <property type="match status" value="1"/>
</dbReference>
<dbReference type="PANTHER" id="PTHR11552:SF147">
    <property type="entry name" value="CHOLINE DEHYDROGENASE, MITOCHONDRIAL"/>
    <property type="match status" value="1"/>
</dbReference>
<dbReference type="PANTHER" id="PTHR11552">
    <property type="entry name" value="GLUCOSE-METHANOL-CHOLINE GMC OXIDOREDUCTASE"/>
    <property type="match status" value="1"/>
</dbReference>
<dbReference type="Pfam" id="PF05199">
    <property type="entry name" value="GMC_oxred_C"/>
    <property type="match status" value="1"/>
</dbReference>
<dbReference type="Pfam" id="PF00732">
    <property type="entry name" value="GMC_oxred_N"/>
    <property type="match status" value="1"/>
</dbReference>
<dbReference type="PIRSF" id="PIRSF000137">
    <property type="entry name" value="Alcohol_oxidase"/>
    <property type="match status" value="1"/>
</dbReference>
<dbReference type="SUPFAM" id="SSF54373">
    <property type="entry name" value="FAD-linked reductases, C-terminal domain"/>
    <property type="match status" value="1"/>
</dbReference>
<dbReference type="SUPFAM" id="SSF51905">
    <property type="entry name" value="FAD/NAD(P)-binding domain"/>
    <property type="match status" value="1"/>
</dbReference>
<dbReference type="PROSITE" id="PS00623">
    <property type="entry name" value="GMC_OXRED_1"/>
    <property type="match status" value="1"/>
</dbReference>
<dbReference type="PROSITE" id="PS00624">
    <property type="entry name" value="GMC_OXRED_2"/>
    <property type="match status" value="1"/>
</dbReference>
<comment type="catalytic activity">
    <reaction>
        <text>choline + A = betaine aldehyde + AH2</text>
        <dbReference type="Rhea" id="RHEA:17433"/>
        <dbReference type="ChEBI" id="CHEBI:13193"/>
        <dbReference type="ChEBI" id="CHEBI:15354"/>
        <dbReference type="ChEBI" id="CHEBI:15710"/>
        <dbReference type="ChEBI" id="CHEBI:17499"/>
        <dbReference type="EC" id="1.1.99.1"/>
    </reaction>
</comment>
<comment type="cofactor">
    <cofactor evidence="1">
        <name>FAD</name>
        <dbReference type="ChEBI" id="CHEBI:57692"/>
    </cofactor>
</comment>
<comment type="pathway">
    <text>Amine and polyamine biosynthesis; betaine biosynthesis via choline pathway; betaine aldehyde from choline (cytochrome c reductase route): step 1/1.</text>
</comment>
<comment type="interaction">
    <interactant intactId="EBI-7127986">
        <id>Q8NE62</id>
    </interactant>
    <interactant intactId="EBI-2432309">
        <id>Q92876</id>
        <label>KLK6</label>
    </interactant>
    <organismsDiffer>false</organismsDiffer>
    <experiments>3</experiments>
</comment>
<comment type="interaction">
    <interactant intactId="EBI-7127986">
        <id>Q8NE62</id>
    </interactant>
    <interactant intactId="EBI-945833">
        <id>Q7Z3S9</id>
        <label>NOTCH2NLA</label>
    </interactant>
    <organismsDiffer>false</organismsDiffer>
    <experiments>3</experiments>
</comment>
<comment type="subcellular location">
    <subcellularLocation>
        <location evidence="1">Mitochondrion inner membrane</location>
    </subcellularLocation>
</comment>
<comment type="similarity">
    <text evidence="5">Belongs to the GMC oxidoreductase family.</text>
</comment>
<accession>Q8NE62</accession>
<accession>Q9NY17</accession>
<reference key="1">
    <citation type="journal article" date="2006" name="Nature">
        <title>The DNA sequence, annotation and analysis of human chromosome 3.</title>
        <authorList>
            <person name="Muzny D.M."/>
            <person name="Scherer S.E."/>
            <person name="Kaul R."/>
            <person name="Wang J."/>
            <person name="Yu J."/>
            <person name="Sudbrak R."/>
            <person name="Buhay C.J."/>
            <person name="Chen R."/>
            <person name="Cree A."/>
            <person name="Ding Y."/>
            <person name="Dugan-Rocha S."/>
            <person name="Gill R."/>
            <person name="Gunaratne P."/>
            <person name="Harris R.A."/>
            <person name="Hawes A.C."/>
            <person name="Hernandez J."/>
            <person name="Hodgson A.V."/>
            <person name="Hume J."/>
            <person name="Jackson A."/>
            <person name="Khan Z.M."/>
            <person name="Kovar-Smith C."/>
            <person name="Lewis L.R."/>
            <person name="Lozado R.J."/>
            <person name="Metzker M.L."/>
            <person name="Milosavljevic A."/>
            <person name="Miner G.R."/>
            <person name="Morgan M.B."/>
            <person name="Nazareth L.V."/>
            <person name="Scott G."/>
            <person name="Sodergren E."/>
            <person name="Song X.-Z."/>
            <person name="Steffen D."/>
            <person name="Wei S."/>
            <person name="Wheeler D.A."/>
            <person name="Wright M.W."/>
            <person name="Worley K.C."/>
            <person name="Yuan Y."/>
            <person name="Zhang Z."/>
            <person name="Adams C.Q."/>
            <person name="Ansari-Lari M.A."/>
            <person name="Ayele M."/>
            <person name="Brown M.J."/>
            <person name="Chen G."/>
            <person name="Chen Z."/>
            <person name="Clendenning J."/>
            <person name="Clerc-Blankenburg K.P."/>
            <person name="Chen R."/>
            <person name="Chen Z."/>
            <person name="Davis C."/>
            <person name="Delgado O."/>
            <person name="Dinh H.H."/>
            <person name="Dong W."/>
            <person name="Draper H."/>
            <person name="Ernst S."/>
            <person name="Fu G."/>
            <person name="Gonzalez-Garay M.L."/>
            <person name="Garcia D.K."/>
            <person name="Gillett W."/>
            <person name="Gu J."/>
            <person name="Hao B."/>
            <person name="Haugen E."/>
            <person name="Havlak P."/>
            <person name="He X."/>
            <person name="Hennig S."/>
            <person name="Hu S."/>
            <person name="Huang W."/>
            <person name="Jackson L.R."/>
            <person name="Jacob L.S."/>
            <person name="Kelly S.H."/>
            <person name="Kube M."/>
            <person name="Levy R."/>
            <person name="Li Z."/>
            <person name="Liu B."/>
            <person name="Liu J."/>
            <person name="Liu W."/>
            <person name="Lu J."/>
            <person name="Maheshwari M."/>
            <person name="Nguyen B.-V."/>
            <person name="Okwuonu G.O."/>
            <person name="Palmeiri A."/>
            <person name="Pasternak S."/>
            <person name="Perez L.M."/>
            <person name="Phelps K.A."/>
            <person name="Plopper F.J."/>
            <person name="Qiang B."/>
            <person name="Raymond C."/>
            <person name="Rodriguez R."/>
            <person name="Saenphimmachak C."/>
            <person name="Santibanez J."/>
            <person name="Shen H."/>
            <person name="Shen Y."/>
            <person name="Subramanian S."/>
            <person name="Tabor P.E."/>
            <person name="Verduzco D."/>
            <person name="Waldron L."/>
            <person name="Wang J."/>
            <person name="Wang J."/>
            <person name="Wang Q."/>
            <person name="Williams G.A."/>
            <person name="Wong G.K.-S."/>
            <person name="Yao Z."/>
            <person name="Zhang J."/>
            <person name="Zhang X."/>
            <person name="Zhao G."/>
            <person name="Zhou J."/>
            <person name="Zhou Y."/>
            <person name="Nelson D."/>
            <person name="Lehrach H."/>
            <person name="Reinhardt R."/>
            <person name="Naylor S.L."/>
            <person name="Yang H."/>
            <person name="Olson M."/>
            <person name="Weinstock G."/>
            <person name="Gibbs R.A."/>
        </authorList>
    </citation>
    <scope>NUCLEOTIDE SEQUENCE [LARGE SCALE GENOMIC DNA]</scope>
</reference>
<reference key="2">
    <citation type="journal article" date="2004" name="Genome Res.">
        <title>The status, quality, and expansion of the NIH full-length cDNA project: the Mammalian Gene Collection (MGC).</title>
        <authorList>
            <consortium name="The MGC Project Team"/>
        </authorList>
    </citation>
    <scope>NUCLEOTIDE SEQUENCE [LARGE SCALE MRNA]</scope>
    <scope>VARIANT ARG-78</scope>
    <source>
        <tissue>Testis</tissue>
    </source>
</reference>
<reference key="3">
    <citation type="submission" date="2000-02" db="EMBL/GenBank/DDBJ databases">
        <title>Analysis of a putative tumor suppressor gene region of 100 kb at chromosome 3p21.1 in conventional renal cell carcinoma.</title>
        <authorList>
            <person name="Bugert P."/>
            <person name="Hanke S."/>
            <person name="Chudek J."/>
            <person name="Kovacs G."/>
        </authorList>
    </citation>
    <scope>NUCLEOTIDE SEQUENCE [MRNA] OF 113-594</scope>
    <source>
        <tissue>Kidney</tissue>
    </source>
</reference>
<reference key="4">
    <citation type="journal article" date="2014" name="J. Proteomics">
        <title>An enzyme assisted RP-RPLC approach for in-depth analysis of human liver phosphoproteome.</title>
        <authorList>
            <person name="Bian Y."/>
            <person name="Song C."/>
            <person name="Cheng K."/>
            <person name="Dong M."/>
            <person name="Wang F."/>
            <person name="Huang J."/>
            <person name="Sun D."/>
            <person name="Wang L."/>
            <person name="Ye M."/>
            <person name="Zou H."/>
        </authorList>
    </citation>
    <scope>IDENTIFICATION BY MASS SPECTROMETRY [LARGE SCALE ANALYSIS]</scope>
    <source>
        <tissue>Liver</tissue>
    </source>
</reference>
<proteinExistence type="evidence at protein level"/>
<gene>
    <name type="primary">CHDH</name>
</gene>